<proteinExistence type="evidence at protein level"/>
<accession>Q5P5I4</accession>
<protein>
    <recommendedName>
        <fullName>(S)-1-Phenylethanol dehydrogenase</fullName>
        <ecNumber>1.1.1.311</ecNumber>
    </recommendedName>
</protein>
<reference key="1">
    <citation type="journal article" date="2005" name="Arch. Microbiol.">
        <title>The genome sequence of an anaerobic aromatic-degrading denitrifying bacterium, strain EbN1.</title>
        <authorList>
            <person name="Rabus R."/>
            <person name="Kube M."/>
            <person name="Heider J."/>
            <person name="Beck A."/>
            <person name="Heitmann K."/>
            <person name="Widdel F."/>
            <person name="Reinhardt R."/>
        </authorList>
    </citation>
    <scope>NUCLEOTIDE SEQUENCE [LARGE SCALE GENOMIC DNA]</scope>
    <source>
        <strain>DSM 19018 / LMG 30748 / EbN1</strain>
    </source>
</reference>
<reference key="2">
    <citation type="journal article" date="2001" name="Arch. Microbiol.">
        <title>(S)-1-phenylethanol dehydrogenase of Azoarcus sp. strain EbN1, an enzyme of anaerobic ethylbenzene catabolism.</title>
        <authorList>
            <person name="Kniemeyer O."/>
            <person name="Heider J."/>
        </authorList>
    </citation>
    <scope>PROTEIN SEQUENCE OF 2-27</scope>
    <scope>FUNCTION</scope>
    <scope>CATALYTIC ACTIVITY</scope>
    <scope>BIOPHYSICOCHEMICAL PROPERTIES</scope>
    <source>
        <strain>DSM 19018 / LMG 30748 / EbN1</strain>
    </source>
</reference>
<reference key="3">
    <citation type="journal article" date="2006" name="Biochemistry">
        <title>Crystal structure and enzyme kinetics of the (S)-specific 1-phenylethanol dehydrogenase of the denitrifying bacterium strain EbN1.</title>
        <authorList>
            <person name="Hoffken H.W."/>
            <person name="Duong M."/>
            <person name="Friedrich T."/>
            <person name="Breuer M."/>
            <person name="Hauer B."/>
            <person name="Reinhardt R."/>
            <person name="Rabus R."/>
            <person name="Heider J."/>
        </authorList>
    </citation>
    <scope>X-RAY CRYSTALLOGRAPHY (2.10 ANGSTROMS) IN COMPLEX WITH NAD</scope>
    <scope>FUNCTION</scope>
    <scope>CATALYTIC ACTIVITY</scope>
    <scope>BIOTECHNOLOGY</scope>
    <scope>SUBUNIT</scope>
    <source>
        <strain>DSM 19018 / LMG 30748 / EbN1</strain>
    </source>
</reference>
<evidence type="ECO:0000250" key="1"/>
<evidence type="ECO:0000269" key="2">
    <source>
    </source>
</evidence>
<evidence type="ECO:0000269" key="3">
    <source>
    </source>
</evidence>
<evidence type="ECO:0000305" key="4"/>
<evidence type="ECO:0007829" key="5">
    <source>
        <dbReference type="PDB" id="2EW8"/>
    </source>
</evidence>
<evidence type="ECO:0007829" key="6">
    <source>
        <dbReference type="PDB" id="2EWM"/>
    </source>
</evidence>
<organism>
    <name type="scientific">Aromatoleum aromaticum (strain DSM 19018 / LMG 30748 / EbN1)</name>
    <name type="common">Azoarcus sp. (strain EbN1)</name>
    <dbReference type="NCBI Taxonomy" id="76114"/>
    <lineage>
        <taxon>Bacteria</taxon>
        <taxon>Pseudomonadati</taxon>
        <taxon>Pseudomonadota</taxon>
        <taxon>Betaproteobacteria</taxon>
        <taxon>Rhodocyclales</taxon>
        <taxon>Rhodocyclaceae</taxon>
        <taxon>Aromatoleum</taxon>
    </lineage>
</organism>
<comment type="function">
    <text evidence="2 3">Catalyzes the NAD-dependent stereospecific oxidation of (S)-1-phenylethanol to acetophenone in the degradation of ethylbenzene.</text>
</comment>
<comment type="catalytic activity">
    <reaction evidence="2 3">
        <text>(S)-1-phenylethanol + NAD(+) = acetophenone + NADH + H(+)</text>
        <dbReference type="Rhea" id="RHEA:28198"/>
        <dbReference type="ChEBI" id="CHEBI:15378"/>
        <dbReference type="ChEBI" id="CHEBI:16346"/>
        <dbReference type="ChEBI" id="CHEBI:27632"/>
        <dbReference type="ChEBI" id="CHEBI:57540"/>
        <dbReference type="ChEBI" id="CHEBI:57945"/>
        <dbReference type="EC" id="1.1.1.311"/>
    </reaction>
</comment>
<comment type="biophysicochemical properties">
    <kinetics>
        <KM evidence="2">1.6 uM for (S)-1-phenylethanol</KM>
        <KM evidence="2">51 uM for NAD(+)</KM>
        <KM evidence="2">1 uM for acetophenone</KM>
        <KM evidence="2">3.3 uM for NADH(+)</KM>
        <Vmax evidence="2">1.4 umol/min/mg enzyme with (S)-1-phenylethanol as substrate</Vmax>
    </kinetics>
</comment>
<comment type="subunit">
    <text evidence="3">Homotetramer.</text>
</comment>
<comment type="biotechnology">
    <text evidence="3">The reverse reaction is of biotechnological interest for the specific production of chiral alcohols from ketones.</text>
</comment>
<comment type="similarity">
    <text evidence="4">Belongs to the short-chain dehydrogenases/reductases (SDR) family.</text>
</comment>
<feature type="initiator methionine" description="Removed" evidence="2">
    <location>
        <position position="1"/>
    </location>
</feature>
<feature type="chain" id="PRO_0000418749" description="(S)-1-Phenylethanol dehydrogenase">
    <location>
        <begin position="2"/>
        <end position="249"/>
    </location>
</feature>
<feature type="active site" description="Proton acceptor">
    <location>
        <position position="154"/>
    </location>
</feature>
<feature type="binding site" evidence="3">
    <location>
        <begin position="17"/>
        <end position="19"/>
    </location>
    <ligand>
        <name>NAD(+)</name>
        <dbReference type="ChEBI" id="CHEBI:57540"/>
    </ligand>
</feature>
<feature type="binding site" evidence="3">
    <location>
        <position position="38"/>
    </location>
    <ligand>
        <name>NAD(+)</name>
        <dbReference type="ChEBI" id="CHEBI:57540"/>
    </ligand>
</feature>
<feature type="binding site" evidence="3">
    <location>
        <begin position="61"/>
        <end position="63"/>
    </location>
    <ligand>
        <name>NAD(+)</name>
        <dbReference type="ChEBI" id="CHEBI:57540"/>
    </ligand>
</feature>
<feature type="binding site" evidence="3">
    <location>
        <position position="89"/>
    </location>
    <ligand>
        <name>NAD(+)</name>
        <dbReference type="ChEBI" id="CHEBI:57540"/>
    </ligand>
</feature>
<feature type="binding site" evidence="3">
    <location>
        <position position="93"/>
    </location>
    <ligand>
        <name>NAD(+)</name>
        <dbReference type="ChEBI" id="CHEBI:57540"/>
    </ligand>
</feature>
<feature type="binding site" evidence="1">
    <location>
        <position position="141"/>
    </location>
    <ligand>
        <name>substrate</name>
    </ligand>
</feature>
<feature type="binding site" evidence="3">
    <location>
        <position position="158"/>
    </location>
    <ligand>
        <name>NAD(+)</name>
        <dbReference type="ChEBI" id="CHEBI:57540"/>
    </ligand>
</feature>
<feature type="binding site" evidence="3">
    <location>
        <begin position="184"/>
        <end position="187"/>
    </location>
    <ligand>
        <name>NAD(+)</name>
        <dbReference type="ChEBI" id="CHEBI:57540"/>
    </ligand>
</feature>
<feature type="binding site" evidence="3">
    <location>
        <position position="191"/>
    </location>
    <ligand>
        <name>NAD(+)</name>
        <dbReference type="ChEBI" id="CHEBI:57540"/>
    </ligand>
</feature>
<feature type="turn" evidence="5">
    <location>
        <begin position="4"/>
        <end position="7"/>
    </location>
</feature>
<feature type="strand" evidence="5">
    <location>
        <begin position="9"/>
        <end position="13"/>
    </location>
</feature>
<feature type="turn" evidence="5">
    <location>
        <begin position="14"/>
        <end position="16"/>
    </location>
</feature>
<feature type="helix" evidence="5">
    <location>
        <begin position="18"/>
        <end position="29"/>
    </location>
</feature>
<feature type="strand" evidence="5">
    <location>
        <begin position="33"/>
        <end position="40"/>
    </location>
</feature>
<feature type="helix" evidence="5">
    <location>
        <begin position="43"/>
        <end position="51"/>
    </location>
</feature>
<feature type="strand" evidence="5">
    <location>
        <begin position="56"/>
        <end position="60"/>
    </location>
</feature>
<feature type="helix" evidence="5">
    <location>
        <begin position="66"/>
        <end position="80"/>
    </location>
</feature>
<feature type="strand" evidence="5">
    <location>
        <begin position="85"/>
        <end position="88"/>
    </location>
</feature>
<feature type="helix" evidence="5">
    <location>
        <begin position="98"/>
        <end position="100"/>
    </location>
</feature>
<feature type="helix" evidence="5">
    <location>
        <begin position="103"/>
        <end position="113"/>
    </location>
</feature>
<feature type="helix" evidence="5">
    <location>
        <begin position="115"/>
        <end position="131"/>
    </location>
</feature>
<feature type="strand" evidence="5">
    <location>
        <begin position="134"/>
        <end position="139"/>
    </location>
</feature>
<feature type="helix" evidence="5">
    <location>
        <begin position="142"/>
        <end position="145"/>
    </location>
</feature>
<feature type="helix" evidence="5">
    <location>
        <begin position="152"/>
        <end position="172"/>
    </location>
</feature>
<feature type="helix" evidence="5">
    <location>
        <begin position="173"/>
        <end position="175"/>
    </location>
</feature>
<feature type="strand" evidence="5">
    <location>
        <begin position="177"/>
        <end position="184"/>
    </location>
</feature>
<feature type="helix" evidence="6">
    <location>
        <begin position="196"/>
        <end position="202"/>
    </location>
</feature>
<feature type="strand" evidence="5">
    <location>
        <begin position="209"/>
        <end position="211"/>
    </location>
</feature>
<feature type="helix" evidence="5">
    <location>
        <begin position="218"/>
        <end position="227"/>
    </location>
</feature>
<feature type="helix" evidence="5">
    <location>
        <begin position="230"/>
        <end position="232"/>
    </location>
</feature>
<feature type="strand" evidence="5">
    <location>
        <begin position="239"/>
        <end position="245"/>
    </location>
</feature>
<sequence length="249" mass="26662">MTQRLKDKLAVITGGANGIGRAIAERFAVEGADIAIADLVPAPEAEAAIRNLGRRVLTVKCDVSQPGDVEAFGKQVISTFGRCDILVNNAGIYPLIPFDELTFEQWKKTFEINVDSGFLMAKAFVPGMKRNGWGRIINLTSTTYWLKIEAYTHYISTKAANIGFTRALASDLGKDGITVNAIAPSLVRTATTEASALSAMFDVLPNMLQAIPRLQVPLDLTGAAAFLASDDASFITGQTLAVDGGMVRH</sequence>
<name>PED_AROAE</name>
<keyword id="KW-0002">3D-structure</keyword>
<keyword id="KW-0903">Direct protein sequencing</keyword>
<keyword id="KW-0520">NAD</keyword>
<keyword id="KW-0547">Nucleotide-binding</keyword>
<keyword id="KW-0560">Oxidoreductase</keyword>
<keyword id="KW-1185">Reference proteome</keyword>
<dbReference type="EC" id="1.1.1.311"/>
<dbReference type="EMBL" id="CR555306">
    <property type="protein sequence ID" value="CAI07428.1"/>
    <property type="molecule type" value="Genomic_DNA"/>
</dbReference>
<dbReference type="RefSeq" id="WP_011237148.1">
    <property type="nucleotide sequence ID" value="NC_006513.1"/>
</dbReference>
<dbReference type="PDB" id="2EW8">
    <property type="method" value="X-ray"/>
    <property type="resolution" value="2.10 A"/>
    <property type="chains" value="A/B/C/D=1-249"/>
</dbReference>
<dbReference type="PDB" id="2EWM">
    <property type="method" value="X-ray"/>
    <property type="resolution" value="2.40 A"/>
    <property type="chains" value="A/B=1-249"/>
</dbReference>
<dbReference type="PDBsum" id="2EW8"/>
<dbReference type="PDBsum" id="2EWM"/>
<dbReference type="SMR" id="Q5P5I4"/>
<dbReference type="STRING" id="76114.c1A58"/>
<dbReference type="KEGG" id="eba:c1A58"/>
<dbReference type="eggNOG" id="COG1028">
    <property type="taxonomic scope" value="Bacteria"/>
</dbReference>
<dbReference type="HOGENOM" id="CLU_010194_1_3_4"/>
<dbReference type="OrthoDB" id="9178657at2"/>
<dbReference type="BioCyc" id="MetaCyc:MONOMER-1364"/>
<dbReference type="BRENDA" id="1.1.1.311">
    <property type="organism ID" value="12182"/>
</dbReference>
<dbReference type="SABIO-RK" id="Q5P5I4"/>
<dbReference type="EvolutionaryTrace" id="Q5P5I4"/>
<dbReference type="Proteomes" id="UP000006552">
    <property type="component" value="Chromosome"/>
</dbReference>
<dbReference type="GO" id="GO:0018449">
    <property type="term" value="F:1-phenylethanol dehydrogenase activity"/>
    <property type="evidence" value="ECO:0007669"/>
    <property type="project" value="UniProtKB-EC"/>
</dbReference>
<dbReference type="GO" id="GO:0000166">
    <property type="term" value="F:nucleotide binding"/>
    <property type="evidence" value="ECO:0007669"/>
    <property type="project" value="UniProtKB-KW"/>
</dbReference>
<dbReference type="GO" id="GO:0016616">
    <property type="term" value="F:oxidoreductase activity, acting on the CH-OH group of donors, NAD or NADP as acceptor"/>
    <property type="evidence" value="ECO:0000314"/>
    <property type="project" value="UniProtKB"/>
</dbReference>
<dbReference type="GO" id="GO:0010130">
    <property type="term" value="P:anaerobic ethylbenzene catabolic process"/>
    <property type="evidence" value="ECO:0000314"/>
    <property type="project" value="UniProtKB"/>
</dbReference>
<dbReference type="GO" id="GO:0051289">
    <property type="term" value="P:protein homotetramerization"/>
    <property type="evidence" value="ECO:0000314"/>
    <property type="project" value="UniProtKB"/>
</dbReference>
<dbReference type="CDD" id="cd05233">
    <property type="entry name" value="SDR_c"/>
    <property type="match status" value="1"/>
</dbReference>
<dbReference type="FunFam" id="3.40.50.720:FF:000084">
    <property type="entry name" value="Short-chain dehydrogenase reductase"/>
    <property type="match status" value="1"/>
</dbReference>
<dbReference type="Gene3D" id="3.40.50.720">
    <property type="entry name" value="NAD(P)-binding Rossmann-like Domain"/>
    <property type="match status" value="1"/>
</dbReference>
<dbReference type="InterPro" id="IPR036291">
    <property type="entry name" value="NAD(P)-bd_dom_sf"/>
</dbReference>
<dbReference type="InterPro" id="IPR050259">
    <property type="entry name" value="SDR"/>
</dbReference>
<dbReference type="InterPro" id="IPR002347">
    <property type="entry name" value="SDR_fam"/>
</dbReference>
<dbReference type="NCBIfam" id="NF005559">
    <property type="entry name" value="PRK07231.1"/>
    <property type="match status" value="1"/>
</dbReference>
<dbReference type="PANTHER" id="PTHR42879">
    <property type="entry name" value="3-OXOACYL-(ACYL-CARRIER-PROTEIN) REDUCTASE"/>
    <property type="match status" value="1"/>
</dbReference>
<dbReference type="PANTHER" id="PTHR42879:SF2">
    <property type="entry name" value="3-OXOACYL-[ACYL-CARRIER-PROTEIN] REDUCTASE FABG"/>
    <property type="match status" value="1"/>
</dbReference>
<dbReference type="Pfam" id="PF13561">
    <property type="entry name" value="adh_short_C2"/>
    <property type="match status" value="1"/>
</dbReference>
<dbReference type="PRINTS" id="PR00081">
    <property type="entry name" value="GDHRDH"/>
</dbReference>
<dbReference type="PRINTS" id="PR00080">
    <property type="entry name" value="SDRFAMILY"/>
</dbReference>
<dbReference type="SUPFAM" id="SSF51735">
    <property type="entry name" value="NAD(P)-binding Rossmann-fold domains"/>
    <property type="match status" value="1"/>
</dbReference>
<gene>
    <name type="primary">ped</name>
    <name type="ordered locus">AZOSEA13030</name>
    <name type="ORF">c1A58</name>
</gene>